<proteinExistence type="predicted"/>
<sequence length="94" mass="10152">MWLPHAFLRVVSPSALRLMPANGCAVPAGCVQCSNRDVGFATGARVFLCCQTGVRIVGSLLLFGAAMEKPRAQSRTTAFKRGVSCTQKFSRSRF</sequence>
<accession>O83916</accession>
<keyword id="KW-1185">Reference proteome</keyword>
<dbReference type="EMBL" id="AE000520">
    <property type="protein sequence ID" value="AAC65912.1"/>
    <property type="molecule type" value="Genomic_DNA"/>
</dbReference>
<dbReference type="PIR" id="D71261">
    <property type="entry name" value="D71261"/>
</dbReference>
<dbReference type="STRING" id="243276.TP_0950"/>
<dbReference type="EnsemblBacteria" id="AAC65912">
    <property type="protein sequence ID" value="AAC65912"/>
    <property type="gene ID" value="TP_0950"/>
</dbReference>
<dbReference type="KEGG" id="tpa:TP_0950"/>
<dbReference type="HOGENOM" id="CLU_2385249_0_0_12"/>
<dbReference type="Proteomes" id="UP000000811">
    <property type="component" value="Chromosome"/>
</dbReference>
<name>Y950_TREPA</name>
<reference key="1">
    <citation type="journal article" date="1998" name="Science">
        <title>Complete genome sequence of Treponema pallidum, the syphilis spirochete.</title>
        <authorList>
            <person name="Fraser C.M."/>
            <person name="Norris S.J."/>
            <person name="Weinstock G.M."/>
            <person name="White O."/>
            <person name="Sutton G.G."/>
            <person name="Dodson R.J."/>
            <person name="Gwinn M.L."/>
            <person name="Hickey E.K."/>
            <person name="Clayton R.A."/>
            <person name="Ketchum K.A."/>
            <person name="Sodergren E."/>
            <person name="Hardham J.M."/>
            <person name="McLeod M.P."/>
            <person name="Salzberg S.L."/>
            <person name="Peterson J.D."/>
            <person name="Khalak H.G."/>
            <person name="Richardson D.L."/>
            <person name="Howell J.K."/>
            <person name="Chidambaram M."/>
            <person name="Utterback T.R."/>
            <person name="McDonald L.A."/>
            <person name="Artiach P."/>
            <person name="Bowman C."/>
            <person name="Cotton M.D."/>
            <person name="Fujii C."/>
            <person name="Garland S.A."/>
            <person name="Hatch B."/>
            <person name="Horst K."/>
            <person name="Roberts K.M."/>
            <person name="Sandusky M."/>
            <person name="Weidman J.F."/>
            <person name="Smith H.O."/>
            <person name="Venter J.C."/>
        </authorList>
    </citation>
    <scope>NUCLEOTIDE SEQUENCE [LARGE SCALE GENOMIC DNA]</scope>
    <source>
        <strain>Nichols</strain>
    </source>
</reference>
<organism>
    <name type="scientific">Treponema pallidum (strain Nichols)</name>
    <dbReference type="NCBI Taxonomy" id="243276"/>
    <lineage>
        <taxon>Bacteria</taxon>
        <taxon>Pseudomonadati</taxon>
        <taxon>Spirochaetota</taxon>
        <taxon>Spirochaetia</taxon>
        <taxon>Spirochaetales</taxon>
        <taxon>Treponemataceae</taxon>
        <taxon>Treponema</taxon>
    </lineage>
</organism>
<protein>
    <recommendedName>
        <fullName>Uncharacterized protein TP_0950</fullName>
    </recommendedName>
</protein>
<feature type="chain" id="PRO_0000202361" description="Uncharacterized protein TP_0950">
    <location>
        <begin position="1"/>
        <end position="94"/>
    </location>
</feature>
<gene>
    <name type="ordered locus">TP_0950</name>
</gene>